<proteinExistence type="inferred from homology"/>
<protein>
    <recommendedName>
        <fullName evidence="1">ATP synthase gamma chain</fullName>
    </recommendedName>
    <alternativeName>
        <fullName evidence="1">ATP synthase F1 sector gamma subunit</fullName>
    </alternativeName>
    <alternativeName>
        <fullName evidence="1">F-ATPase gamma subunit</fullName>
    </alternativeName>
</protein>
<evidence type="ECO:0000255" key="1">
    <source>
        <dbReference type="HAMAP-Rule" id="MF_00815"/>
    </source>
</evidence>
<gene>
    <name evidence="1" type="primary">atpG</name>
    <name type="ordered locus">SGR_2164</name>
</gene>
<organism>
    <name type="scientific">Streptomyces griseus subsp. griseus (strain JCM 4626 / CBS 651.72 / NBRC 13350 / KCC S-0626 / ISP 5235)</name>
    <dbReference type="NCBI Taxonomy" id="455632"/>
    <lineage>
        <taxon>Bacteria</taxon>
        <taxon>Bacillati</taxon>
        <taxon>Actinomycetota</taxon>
        <taxon>Actinomycetes</taxon>
        <taxon>Kitasatosporales</taxon>
        <taxon>Streptomycetaceae</taxon>
        <taxon>Streptomyces</taxon>
    </lineage>
</organism>
<reference key="1">
    <citation type="journal article" date="2008" name="J. Bacteriol.">
        <title>Genome sequence of the streptomycin-producing microorganism Streptomyces griseus IFO 13350.</title>
        <authorList>
            <person name="Ohnishi Y."/>
            <person name="Ishikawa J."/>
            <person name="Hara H."/>
            <person name="Suzuki H."/>
            <person name="Ikenoya M."/>
            <person name="Ikeda H."/>
            <person name="Yamashita A."/>
            <person name="Hattori M."/>
            <person name="Horinouchi S."/>
        </authorList>
    </citation>
    <scope>NUCLEOTIDE SEQUENCE [LARGE SCALE GENOMIC DNA]</scope>
    <source>
        <strain>JCM 4626 / CBS 651.72 / NBRC 13350 / KCC S-0626 / ISP 5235</strain>
    </source>
</reference>
<comment type="function">
    <text evidence="1">Produces ATP from ADP in the presence of a proton gradient across the membrane. The gamma chain is believed to be important in regulating ATPase activity and the flow of protons through the CF(0) complex.</text>
</comment>
<comment type="subunit">
    <text evidence="1">F-type ATPases have 2 components, CF(1) - the catalytic core - and CF(0) - the membrane proton channel. CF(1) has five subunits: alpha(3), beta(3), gamma(1), delta(1), epsilon(1). CF(0) has three main subunits: a, b and c.</text>
</comment>
<comment type="subcellular location">
    <subcellularLocation>
        <location evidence="1">Cell membrane</location>
        <topology evidence="1">Peripheral membrane protein</topology>
    </subcellularLocation>
</comment>
<comment type="similarity">
    <text evidence="1">Belongs to the ATPase gamma chain family.</text>
</comment>
<keyword id="KW-0066">ATP synthesis</keyword>
<keyword id="KW-1003">Cell membrane</keyword>
<keyword id="KW-0139">CF(1)</keyword>
<keyword id="KW-0375">Hydrogen ion transport</keyword>
<keyword id="KW-0406">Ion transport</keyword>
<keyword id="KW-0472">Membrane</keyword>
<keyword id="KW-0813">Transport</keyword>
<dbReference type="EMBL" id="AP009493">
    <property type="protein sequence ID" value="BAG18993.1"/>
    <property type="molecule type" value="Genomic_DNA"/>
</dbReference>
<dbReference type="RefSeq" id="WP_012379018.1">
    <property type="nucleotide sequence ID" value="NC_010572.1"/>
</dbReference>
<dbReference type="SMR" id="B1W0A4"/>
<dbReference type="KEGG" id="sgr:SGR_2164"/>
<dbReference type="PATRIC" id="fig|455632.4.peg.2199"/>
<dbReference type="eggNOG" id="COG0224">
    <property type="taxonomic scope" value="Bacteria"/>
</dbReference>
<dbReference type="HOGENOM" id="CLU_050669_0_0_11"/>
<dbReference type="Proteomes" id="UP000001685">
    <property type="component" value="Chromosome"/>
</dbReference>
<dbReference type="GO" id="GO:0005886">
    <property type="term" value="C:plasma membrane"/>
    <property type="evidence" value="ECO:0007669"/>
    <property type="project" value="UniProtKB-SubCell"/>
</dbReference>
<dbReference type="GO" id="GO:0045259">
    <property type="term" value="C:proton-transporting ATP synthase complex"/>
    <property type="evidence" value="ECO:0007669"/>
    <property type="project" value="UniProtKB-KW"/>
</dbReference>
<dbReference type="GO" id="GO:0005524">
    <property type="term" value="F:ATP binding"/>
    <property type="evidence" value="ECO:0007669"/>
    <property type="project" value="UniProtKB-UniRule"/>
</dbReference>
<dbReference type="GO" id="GO:0046933">
    <property type="term" value="F:proton-transporting ATP synthase activity, rotational mechanism"/>
    <property type="evidence" value="ECO:0007669"/>
    <property type="project" value="UniProtKB-UniRule"/>
</dbReference>
<dbReference type="GO" id="GO:0042777">
    <property type="term" value="P:proton motive force-driven plasma membrane ATP synthesis"/>
    <property type="evidence" value="ECO:0007669"/>
    <property type="project" value="UniProtKB-UniRule"/>
</dbReference>
<dbReference type="CDD" id="cd12151">
    <property type="entry name" value="F1-ATPase_gamma"/>
    <property type="match status" value="1"/>
</dbReference>
<dbReference type="FunFam" id="1.10.287.80:FF:000010">
    <property type="entry name" value="ATP synthase gamma chain"/>
    <property type="match status" value="1"/>
</dbReference>
<dbReference type="Gene3D" id="3.40.1380.10">
    <property type="match status" value="1"/>
</dbReference>
<dbReference type="Gene3D" id="1.10.287.80">
    <property type="entry name" value="ATP synthase, gamma subunit, helix hairpin domain"/>
    <property type="match status" value="1"/>
</dbReference>
<dbReference type="HAMAP" id="MF_00815">
    <property type="entry name" value="ATP_synth_gamma_bact"/>
    <property type="match status" value="1"/>
</dbReference>
<dbReference type="InterPro" id="IPR035968">
    <property type="entry name" value="ATP_synth_F1_ATPase_gsu"/>
</dbReference>
<dbReference type="InterPro" id="IPR000131">
    <property type="entry name" value="ATP_synth_F1_gsu"/>
</dbReference>
<dbReference type="InterPro" id="IPR023632">
    <property type="entry name" value="ATP_synth_F1_gsu_CS"/>
</dbReference>
<dbReference type="NCBIfam" id="TIGR01146">
    <property type="entry name" value="ATPsyn_F1gamma"/>
    <property type="match status" value="1"/>
</dbReference>
<dbReference type="NCBIfam" id="NF004145">
    <property type="entry name" value="PRK05621.1-2"/>
    <property type="match status" value="1"/>
</dbReference>
<dbReference type="PANTHER" id="PTHR11693">
    <property type="entry name" value="ATP SYNTHASE GAMMA CHAIN"/>
    <property type="match status" value="1"/>
</dbReference>
<dbReference type="PANTHER" id="PTHR11693:SF22">
    <property type="entry name" value="ATP SYNTHASE SUBUNIT GAMMA, MITOCHONDRIAL"/>
    <property type="match status" value="1"/>
</dbReference>
<dbReference type="Pfam" id="PF00231">
    <property type="entry name" value="ATP-synt"/>
    <property type="match status" value="1"/>
</dbReference>
<dbReference type="PRINTS" id="PR00126">
    <property type="entry name" value="ATPASEGAMMA"/>
</dbReference>
<dbReference type="SUPFAM" id="SSF52943">
    <property type="entry name" value="ATP synthase (F1-ATPase), gamma subunit"/>
    <property type="match status" value="1"/>
</dbReference>
<dbReference type="PROSITE" id="PS00153">
    <property type="entry name" value="ATPASE_GAMMA"/>
    <property type="match status" value="1"/>
</dbReference>
<name>ATPG_STRGG</name>
<feature type="chain" id="PRO_1000134210" description="ATP synthase gamma chain">
    <location>
        <begin position="1"/>
        <end position="305"/>
    </location>
</feature>
<sequence length="305" mass="32939">MGAQLRVYKRRIQAVTATKKITKAMEMIAASRIVKAQRKVAASKPYATELTRAVTAVATGSNAKHPLTTEVETPTRAAVLLVTSDRGLAGGYSSNAIKAAERLRERLASEGKEVDTYIVGRKGVAYYGFRERKVEDSWTGFTDNPAYSDAKSIAAPLIEAIQKETAEGGVDELHIVFTEFVSMMTQNAVDDRMLPLSLDDVAEESTRKGEILPLFDFEPSAEDVLDALLPRYVESRIYNALLQAAASEHAARRRAMKSATDNAGDLIKSLSRLANAARQAEITQEISEIVGGASALADATAGSDK</sequence>
<accession>B1W0A4</accession>